<evidence type="ECO:0000250" key="1"/>
<evidence type="ECO:0000255" key="2">
    <source>
        <dbReference type="PROSITE-ProRule" id="PRU01346"/>
    </source>
</evidence>
<evidence type="ECO:0000305" key="3"/>
<dbReference type="EMBL" id="AAFI02000013">
    <property type="protein sequence ID" value="EAL69610.1"/>
    <property type="molecule type" value="Genomic_DNA"/>
</dbReference>
<dbReference type="RefSeq" id="XP_643590.1">
    <property type="nucleotide sequence ID" value="XM_638498.1"/>
</dbReference>
<dbReference type="SMR" id="Q552U1"/>
<dbReference type="FunCoup" id="Q552U1">
    <property type="interactions" value="692"/>
</dbReference>
<dbReference type="STRING" id="44689.Q552U1"/>
<dbReference type="PaxDb" id="44689-DDB0233198"/>
<dbReference type="EnsemblProtists" id="EAL69610">
    <property type="protein sequence ID" value="EAL69610"/>
    <property type="gene ID" value="DDB_G0275719"/>
</dbReference>
<dbReference type="GeneID" id="8620177"/>
<dbReference type="KEGG" id="ddi:DDB_G0275719"/>
<dbReference type="dictyBase" id="DDB_G0275719">
    <property type="gene designation" value="lsm6"/>
</dbReference>
<dbReference type="VEuPathDB" id="AmoebaDB:DDB_G0275719"/>
<dbReference type="eggNOG" id="KOG1783">
    <property type="taxonomic scope" value="Eukaryota"/>
</dbReference>
<dbReference type="HOGENOM" id="CLU_076902_7_5_1"/>
<dbReference type="InParanoid" id="Q552U1"/>
<dbReference type="OMA" id="EQTVEYV"/>
<dbReference type="PhylomeDB" id="Q552U1"/>
<dbReference type="Reactome" id="R-DDI-430039">
    <property type="pathway name" value="mRNA decay by 5' to 3' exoribonuclease"/>
</dbReference>
<dbReference type="PRO" id="PR:Q552U1"/>
<dbReference type="Proteomes" id="UP000002195">
    <property type="component" value="Chromosome 2"/>
</dbReference>
<dbReference type="GO" id="GO:0005730">
    <property type="term" value="C:nucleolus"/>
    <property type="evidence" value="ECO:0000250"/>
    <property type="project" value="dictyBase"/>
</dbReference>
<dbReference type="GO" id="GO:0000932">
    <property type="term" value="C:P-body"/>
    <property type="evidence" value="ECO:0000318"/>
    <property type="project" value="GO_Central"/>
</dbReference>
<dbReference type="GO" id="GO:0005732">
    <property type="term" value="C:sno(s)RNA-containing ribonucleoprotein complex"/>
    <property type="evidence" value="ECO:0000250"/>
    <property type="project" value="dictyBase"/>
</dbReference>
<dbReference type="GO" id="GO:0005681">
    <property type="term" value="C:spliceosomal complex"/>
    <property type="evidence" value="ECO:0007669"/>
    <property type="project" value="UniProtKB-KW"/>
</dbReference>
<dbReference type="GO" id="GO:0046540">
    <property type="term" value="C:U4/U6 x U5 tri-snRNP complex"/>
    <property type="evidence" value="ECO:0000250"/>
    <property type="project" value="dictyBase"/>
</dbReference>
<dbReference type="GO" id="GO:0005688">
    <property type="term" value="C:U6 snRNP"/>
    <property type="evidence" value="ECO:0000250"/>
    <property type="project" value="dictyBase"/>
</dbReference>
<dbReference type="GO" id="GO:0003723">
    <property type="term" value="F:RNA binding"/>
    <property type="evidence" value="ECO:0000250"/>
    <property type="project" value="dictyBase"/>
</dbReference>
<dbReference type="GO" id="GO:0030490">
    <property type="term" value="P:maturation of SSU-rRNA"/>
    <property type="evidence" value="ECO:0000318"/>
    <property type="project" value="GO_Central"/>
</dbReference>
<dbReference type="GO" id="GO:0000398">
    <property type="term" value="P:mRNA splicing, via spliceosome"/>
    <property type="evidence" value="ECO:0000250"/>
    <property type="project" value="dictyBase"/>
</dbReference>
<dbReference type="GO" id="GO:0008033">
    <property type="term" value="P:tRNA processing"/>
    <property type="evidence" value="ECO:0007669"/>
    <property type="project" value="UniProtKB-KW"/>
</dbReference>
<dbReference type="CDD" id="cd01726">
    <property type="entry name" value="LSm6"/>
    <property type="match status" value="1"/>
</dbReference>
<dbReference type="FunFam" id="2.30.30.100:FF:000037">
    <property type="entry name" value="U6 snRNA-associated Sm-like protein LSm6"/>
    <property type="match status" value="1"/>
</dbReference>
<dbReference type="Gene3D" id="2.30.30.100">
    <property type="match status" value="1"/>
</dbReference>
<dbReference type="InterPro" id="IPR016487">
    <property type="entry name" value="Lsm6/sSmF"/>
</dbReference>
<dbReference type="InterPro" id="IPR010920">
    <property type="entry name" value="LSM_dom_sf"/>
</dbReference>
<dbReference type="InterPro" id="IPR047575">
    <property type="entry name" value="Sm"/>
</dbReference>
<dbReference type="InterPro" id="IPR001163">
    <property type="entry name" value="Sm_dom_euk/arc"/>
</dbReference>
<dbReference type="PANTHER" id="PTHR11021">
    <property type="entry name" value="SMALL NUCLEAR RIBONUCLEOPROTEIN F SNRNP-F"/>
    <property type="match status" value="1"/>
</dbReference>
<dbReference type="PANTHER" id="PTHR11021:SF1">
    <property type="entry name" value="U6 SNRNA-ASSOCIATED SM-LIKE PROTEIN LSM6"/>
    <property type="match status" value="1"/>
</dbReference>
<dbReference type="Pfam" id="PF01423">
    <property type="entry name" value="LSM"/>
    <property type="match status" value="1"/>
</dbReference>
<dbReference type="SMART" id="SM00651">
    <property type="entry name" value="Sm"/>
    <property type="match status" value="1"/>
</dbReference>
<dbReference type="SUPFAM" id="SSF50182">
    <property type="entry name" value="Sm-like ribonucleoproteins"/>
    <property type="match status" value="1"/>
</dbReference>
<dbReference type="PROSITE" id="PS52002">
    <property type="entry name" value="SM"/>
    <property type="match status" value="1"/>
</dbReference>
<sequence>MTTTTTTSNTSNNSNAQFNFFKMCIGRPVVVKLNNGVEYRGILEVVDGNMNIVMEQTEEYLNGQLKTKYGDCFLRGNNVLYISAQPRK</sequence>
<reference key="1">
    <citation type="journal article" date="2002" name="Nature">
        <title>Sequence and analysis of chromosome 2 of Dictyostelium discoideum.</title>
        <authorList>
            <person name="Gloeckner G."/>
            <person name="Eichinger L."/>
            <person name="Szafranski K."/>
            <person name="Pachebat J.A."/>
            <person name="Bankier A.T."/>
            <person name="Dear P.H."/>
            <person name="Lehmann R."/>
            <person name="Baumgart C."/>
            <person name="Parra G."/>
            <person name="Abril J.F."/>
            <person name="Guigo R."/>
            <person name="Kumpf K."/>
            <person name="Tunggal B."/>
            <person name="Cox E.C."/>
            <person name="Quail M.A."/>
            <person name="Platzer M."/>
            <person name="Rosenthal A."/>
            <person name="Noegel A.A."/>
        </authorList>
    </citation>
    <scope>NUCLEOTIDE SEQUENCE [LARGE SCALE GENOMIC DNA]</scope>
    <source>
        <strain>AX4</strain>
    </source>
</reference>
<reference key="2">
    <citation type="journal article" date="2005" name="Nature">
        <title>The genome of the social amoeba Dictyostelium discoideum.</title>
        <authorList>
            <person name="Eichinger L."/>
            <person name="Pachebat J.A."/>
            <person name="Gloeckner G."/>
            <person name="Rajandream M.A."/>
            <person name="Sucgang R."/>
            <person name="Berriman M."/>
            <person name="Song J."/>
            <person name="Olsen R."/>
            <person name="Szafranski K."/>
            <person name="Xu Q."/>
            <person name="Tunggal B."/>
            <person name="Kummerfeld S."/>
            <person name="Madera M."/>
            <person name="Konfortov B.A."/>
            <person name="Rivero F."/>
            <person name="Bankier A.T."/>
            <person name="Lehmann R."/>
            <person name="Hamlin N."/>
            <person name="Davies R."/>
            <person name="Gaudet P."/>
            <person name="Fey P."/>
            <person name="Pilcher K."/>
            <person name="Chen G."/>
            <person name="Saunders D."/>
            <person name="Sodergren E.J."/>
            <person name="Davis P."/>
            <person name="Kerhornou A."/>
            <person name="Nie X."/>
            <person name="Hall N."/>
            <person name="Anjard C."/>
            <person name="Hemphill L."/>
            <person name="Bason N."/>
            <person name="Farbrother P."/>
            <person name="Desany B."/>
            <person name="Just E."/>
            <person name="Morio T."/>
            <person name="Rost R."/>
            <person name="Churcher C.M."/>
            <person name="Cooper J."/>
            <person name="Haydock S."/>
            <person name="van Driessche N."/>
            <person name="Cronin A."/>
            <person name="Goodhead I."/>
            <person name="Muzny D.M."/>
            <person name="Mourier T."/>
            <person name="Pain A."/>
            <person name="Lu M."/>
            <person name="Harper D."/>
            <person name="Lindsay R."/>
            <person name="Hauser H."/>
            <person name="James K.D."/>
            <person name="Quiles M."/>
            <person name="Madan Babu M."/>
            <person name="Saito T."/>
            <person name="Buchrieser C."/>
            <person name="Wardroper A."/>
            <person name="Felder M."/>
            <person name="Thangavelu M."/>
            <person name="Johnson D."/>
            <person name="Knights A."/>
            <person name="Loulseged H."/>
            <person name="Mungall K.L."/>
            <person name="Oliver K."/>
            <person name="Price C."/>
            <person name="Quail M.A."/>
            <person name="Urushihara H."/>
            <person name="Hernandez J."/>
            <person name="Rabbinowitsch E."/>
            <person name="Steffen D."/>
            <person name="Sanders M."/>
            <person name="Ma J."/>
            <person name="Kohara Y."/>
            <person name="Sharp S."/>
            <person name="Simmonds M.N."/>
            <person name="Spiegler S."/>
            <person name="Tivey A."/>
            <person name="Sugano S."/>
            <person name="White B."/>
            <person name="Walker D."/>
            <person name="Woodward J.R."/>
            <person name="Winckler T."/>
            <person name="Tanaka Y."/>
            <person name="Shaulsky G."/>
            <person name="Schleicher M."/>
            <person name="Weinstock G.M."/>
            <person name="Rosenthal A."/>
            <person name="Cox E.C."/>
            <person name="Chisholm R.L."/>
            <person name="Gibbs R.A."/>
            <person name="Loomis W.F."/>
            <person name="Platzer M."/>
            <person name="Kay R.R."/>
            <person name="Williams J.G."/>
            <person name="Dear P.H."/>
            <person name="Noegel A.A."/>
            <person name="Barrell B.G."/>
            <person name="Kuspa A."/>
        </authorList>
    </citation>
    <scope>NUCLEOTIDE SEQUENCE [LARGE SCALE GENOMIC DNA]</scope>
    <source>
        <strain>AX4</strain>
    </source>
</reference>
<organism>
    <name type="scientific">Dictyostelium discoideum</name>
    <name type="common">Social amoeba</name>
    <dbReference type="NCBI Taxonomy" id="44689"/>
    <lineage>
        <taxon>Eukaryota</taxon>
        <taxon>Amoebozoa</taxon>
        <taxon>Evosea</taxon>
        <taxon>Eumycetozoa</taxon>
        <taxon>Dictyostelia</taxon>
        <taxon>Dictyosteliales</taxon>
        <taxon>Dictyosteliaceae</taxon>
        <taxon>Dictyostelium</taxon>
    </lineage>
</organism>
<accession>Q552U1</accession>
<accession>Q86ID1</accession>
<proteinExistence type="inferred from homology"/>
<feature type="chain" id="PRO_0000328008" description="Probable U6 snRNA-associated Sm-like protein LSm6">
    <location>
        <begin position="1"/>
        <end position="88"/>
    </location>
</feature>
<feature type="domain" description="Sm" evidence="2">
    <location>
        <begin position="16"/>
        <end position="88"/>
    </location>
</feature>
<gene>
    <name type="primary">lsm6</name>
    <name type="ORF">DDB_G0275719</name>
</gene>
<comment type="function">
    <text evidence="1">Component of LSm protein complexes, which are involved in RNA processing and may function in a chaperone-like manner, facilitating the efficient association of RNA processing factors with their substrates. Component of the cytoplasmic LSM1-LSM7 complex, which is thought to be involved in mRNA degradation by activating the decapping step in the 5'-to-3' mRNA decay pathway. Component of the nuclear LSM2-LSM8 complex, which is involved in splicing of nuclear mRNAs. LSM2-LSM8 associates with multiple snRNP complexes containing the U6 snRNA (U4/U6 di-snRNP, spliceosomal U4/U6.U5 tri-snRNP, and free U6 snRNP). It binds directly to the 3'-terminal U-tract of U6 snRNA and plays a role in the biogenesis and stability of the U6 snRNP and U4/U6 snRNP complexes. LSM2-LSM8 probably also is involved degradation of nuclear pre-mRNA by targeting them for decapping, and in processing of pre-tRNAs, pre-rRNAs and U3 snoRNA (By similarity).</text>
</comment>
<comment type="subunit">
    <text evidence="1">Component of the heptameric LSM1-LSM7 complex, which consists of LSM1, LSM2, LSM3, LSM4, LSM5, LSM6 and LSM7. Component of the heptameric LSM2-LSM8 complex, which consists of LSM2, LSM3, LSM4, LSM5, LSM6, LSM7 and LSM8. The LSm subunits form a seven-membered ring structure with a doughnut shape (By similarity).</text>
</comment>
<comment type="subcellular location">
    <subcellularLocation>
        <location evidence="1">Cytoplasm</location>
    </subcellularLocation>
    <subcellularLocation>
        <location evidence="1">Nucleus</location>
    </subcellularLocation>
</comment>
<comment type="similarity">
    <text evidence="3">Belongs to the snRNP Sm proteins family. SmF/LSm6 subfamily.</text>
</comment>
<keyword id="KW-0963">Cytoplasm</keyword>
<keyword id="KW-0507">mRNA processing</keyword>
<keyword id="KW-0508">mRNA splicing</keyword>
<keyword id="KW-0539">Nucleus</keyword>
<keyword id="KW-1185">Reference proteome</keyword>
<keyword id="KW-0687">Ribonucleoprotein</keyword>
<keyword id="KW-0694">RNA-binding</keyword>
<keyword id="KW-0698">rRNA processing</keyword>
<keyword id="KW-0747">Spliceosome</keyword>
<keyword id="KW-0819">tRNA processing</keyword>
<name>LSM6_DICDI</name>
<protein>
    <recommendedName>
        <fullName>Probable U6 snRNA-associated Sm-like protein LSm6</fullName>
    </recommendedName>
</protein>